<accession>P19870</accession>
<sequence length="393" mass="41683">MANTVYDVTTWSGATISPYVDIGAVINQIIADIKANQTSQAARPGAVIYIPPGHYDLLTRVVVDVSFLQIKGSGHGFLSEAIRDESSTGSWVETQPGASHIRVKNTDGNREAFLVSRSGDPNVVGRLNSIEFKGFCLDGVTDSKPYSPGNSKIGISVQSDNDSFHVEGMGFVYLEHAIIVKGADAPNITNNFIAECGSCIELTGASQVAKITNNFLISAWAGYSIYAENAEGPLITGNSLLWAANITLSDCNRVSISSNKLLSNFPSMVALLGNCSENLIAANHFRRVSGDGTSTRFDDLFGLVHIEGNNNTVTGNMFSFNVPASSISPSGATPTIILVKSGDSNYLATNNIVSNVSAMVVLDGSTTATRIIYSAKNSQLNAYTTSYTLVPTP</sequence>
<name>INU2_ARTGO</name>
<proteinExistence type="evidence at protein level"/>
<feature type="initiator methionine" description="Removed" evidence="1 2">
    <location>
        <position position="1"/>
    </location>
</feature>
<feature type="chain" id="PRO_0000084209" description="Inulin fructotransferase [DFA-I-forming]">
    <location>
        <begin position="2"/>
        <end position="393"/>
    </location>
</feature>
<protein>
    <recommendedName>
        <fullName>Inulin fructotransferase [DFA-I-forming]</fullName>
        <ecNumber>4.2.2.17</ecNumber>
    </recommendedName>
    <alternativeName>
        <fullName>Inulin fructotransferase [depolymerizing, difructofuranose-1,2':2',1-dianhydride-forming]</fullName>
    </alternativeName>
</protein>
<organism>
    <name type="scientific">Arthrobacter globiformis</name>
    <dbReference type="NCBI Taxonomy" id="1665"/>
    <lineage>
        <taxon>Bacteria</taxon>
        <taxon>Bacillati</taxon>
        <taxon>Actinomycetota</taxon>
        <taxon>Actinomycetes</taxon>
        <taxon>Micrococcales</taxon>
        <taxon>Micrococcaceae</taxon>
        <taxon>Arthrobacter</taxon>
    </lineage>
</organism>
<comment type="catalytic activity">
    <reaction>
        <text>Produces alpha-D-fructofuranose beta-D-fructofuranose 1,2':2,1'-dianhydride (DFA I) by successively eliminating the diminishing (2-&gt;1)-beta-D-fructan (inulin) chain from the terminal D-fructosyl-D-fructosyl disaccharide.</text>
        <dbReference type="EC" id="4.2.2.17"/>
    </reaction>
</comment>
<evidence type="ECO:0000269" key="1">
    <source>
    </source>
</evidence>
<evidence type="ECO:0000269" key="2">
    <source ref="2"/>
</evidence>
<keyword id="KW-0903">Direct protein sequencing</keyword>
<keyword id="KW-0328">Glycosyltransferase</keyword>
<keyword id="KW-0456">Lyase</keyword>
<keyword id="KW-0808">Transferase</keyword>
<reference key="1">
    <citation type="journal article" date="1995" name="Biosci. Biotechnol. Biochem.">
        <title>Cloning and nucleotide sequence of the inulin fructotransferase (DFA I-producing) gene of Arthrobacter globiformis S14-3.</title>
        <authorList>
            <person name="Haraguchi K."/>
            <person name="Seki K."/>
            <person name="Kishimoto M."/>
            <person name="Nagata T."/>
            <person name="Kasumi T."/>
            <person name="Kainuma K."/>
            <person name="Kobayashi S."/>
        </authorList>
    </citation>
    <scope>NUCLEOTIDE SEQUENCE [GENOMIC DNA]</scope>
    <scope>PROTEIN SEQUENCE OF 2-21 AND 341-265</scope>
    <source>
        <strain>S14-3</strain>
    </source>
</reference>
<reference key="2">
    <citation type="journal article" date="1989" name="Agric. Biol. Chem.">
        <title>Purification and properties of a novel inulin fructotransferase (DFA I-producing) from Arthrobacter globiformis S14-3.</title>
        <authorList>
            <person name="Seki K."/>
            <person name="Haraguchi K."/>
            <person name="Kishimoto M."/>
            <person name="Kobayashi S."/>
            <person name="Kainuma K."/>
        </authorList>
    </citation>
    <scope>PROTEIN SEQUENCE OF 2-21</scope>
    <source>
        <strain>S14-3</strain>
    </source>
</reference>
<dbReference type="EC" id="4.2.2.17"/>
<dbReference type="EMBL" id="D38528">
    <property type="protein sequence ID" value="BAA07533.1"/>
    <property type="molecule type" value="Genomic_DNA"/>
</dbReference>
<dbReference type="PIR" id="JC4318">
    <property type="entry name" value="JC4318"/>
</dbReference>
<dbReference type="SMR" id="P19870"/>
<dbReference type="CAZy" id="GH91">
    <property type="family name" value="Glycoside Hydrolase Family 91"/>
</dbReference>
<dbReference type="KEGG" id="ag:BAA07533"/>
<dbReference type="BioCyc" id="MetaCyc:MONOMER-21803"/>
<dbReference type="GO" id="GO:0016757">
    <property type="term" value="F:glycosyltransferase activity"/>
    <property type="evidence" value="ECO:0007669"/>
    <property type="project" value="UniProtKB-KW"/>
</dbReference>
<dbReference type="GO" id="GO:0033997">
    <property type="term" value="F:inulin fructotransferase (DFA-I-forming) activity"/>
    <property type="evidence" value="ECO:0007669"/>
    <property type="project" value="UniProtKB-EC"/>
</dbReference>
<dbReference type="CDD" id="cd21111">
    <property type="entry name" value="IFTase"/>
    <property type="match status" value="1"/>
</dbReference>
<dbReference type="Gene3D" id="2.160.20.10">
    <property type="entry name" value="Single-stranded right-handed beta-helix, Pectin lyase-like"/>
    <property type="match status" value="1"/>
</dbReference>
<dbReference type="InterPro" id="IPR040526">
    <property type="entry name" value="Beta_helix_2"/>
</dbReference>
<dbReference type="InterPro" id="IPR007742">
    <property type="entry name" value="NosD_dom"/>
</dbReference>
<dbReference type="InterPro" id="IPR012334">
    <property type="entry name" value="Pectin_lyas_fold"/>
</dbReference>
<dbReference type="InterPro" id="IPR011050">
    <property type="entry name" value="Pectin_lyase_fold/virulence"/>
</dbReference>
<dbReference type="Pfam" id="PF18835">
    <property type="entry name" value="Beta_helix_2"/>
    <property type="match status" value="1"/>
</dbReference>
<dbReference type="Pfam" id="PF05048">
    <property type="entry name" value="NosD"/>
    <property type="match status" value="1"/>
</dbReference>
<dbReference type="SUPFAM" id="SSF51126">
    <property type="entry name" value="Pectin lyase-like"/>
    <property type="match status" value="1"/>
</dbReference>